<evidence type="ECO:0000255" key="1">
    <source>
        <dbReference type="HAMAP-Rule" id="MF_00402"/>
    </source>
</evidence>
<evidence type="ECO:0000305" key="2"/>
<sequence length="115" mass="13021">MSDIIKRIEAEQMTKELPEFGPGDTVVVQVKVKEGSNERLQAYEGVVIAKKNRGLNSSFIVRKISHGVGVERTFQTYSPLVDSVEVKRRGDVRRAKLYYLRDLSGKAARIKEKVK</sequence>
<protein>
    <recommendedName>
        <fullName evidence="1">Large ribosomal subunit protein bL19</fullName>
    </recommendedName>
    <alternativeName>
        <fullName evidence="2">50S ribosomal protein L19</fullName>
    </alternativeName>
</protein>
<accession>Q31HX7</accession>
<dbReference type="EMBL" id="CP000109">
    <property type="protein sequence ID" value="ABB41246.1"/>
    <property type="molecule type" value="Genomic_DNA"/>
</dbReference>
<dbReference type="SMR" id="Q31HX7"/>
<dbReference type="STRING" id="317025.Tcr_0650"/>
<dbReference type="KEGG" id="tcx:Tcr_0650"/>
<dbReference type="eggNOG" id="COG0335">
    <property type="taxonomic scope" value="Bacteria"/>
</dbReference>
<dbReference type="HOGENOM" id="CLU_103507_2_1_6"/>
<dbReference type="OrthoDB" id="9803541at2"/>
<dbReference type="GO" id="GO:0022625">
    <property type="term" value="C:cytosolic large ribosomal subunit"/>
    <property type="evidence" value="ECO:0007669"/>
    <property type="project" value="TreeGrafter"/>
</dbReference>
<dbReference type="GO" id="GO:0003735">
    <property type="term" value="F:structural constituent of ribosome"/>
    <property type="evidence" value="ECO:0007669"/>
    <property type="project" value="InterPro"/>
</dbReference>
<dbReference type="GO" id="GO:0006412">
    <property type="term" value="P:translation"/>
    <property type="evidence" value="ECO:0007669"/>
    <property type="project" value="UniProtKB-UniRule"/>
</dbReference>
<dbReference type="FunFam" id="2.30.30.790:FF:000001">
    <property type="entry name" value="50S ribosomal protein L19"/>
    <property type="match status" value="1"/>
</dbReference>
<dbReference type="Gene3D" id="2.30.30.790">
    <property type="match status" value="1"/>
</dbReference>
<dbReference type="HAMAP" id="MF_00402">
    <property type="entry name" value="Ribosomal_bL19"/>
    <property type="match status" value="1"/>
</dbReference>
<dbReference type="InterPro" id="IPR001857">
    <property type="entry name" value="Ribosomal_bL19"/>
</dbReference>
<dbReference type="InterPro" id="IPR018257">
    <property type="entry name" value="Ribosomal_bL19_CS"/>
</dbReference>
<dbReference type="InterPro" id="IPR038657">
    <property type="entry name" value="Ribosomal_bL19_sf"/>
</dbReference>
<dbReference type="InterPro" id="IPR008991">
    <property type="entry name" value="Translation_prot_SH3-like_sf"/>
</dbReference>
<dbReference type="NCBIfam" id="TIGR01024">
    <property type="entry name" value="rplS_bact"/>
    <property type="match status" value="1"/>
</dbReference>
<dbReference type="PANTHER" id="PTHR15680:SF9">
    <property type="entry name" value="LARGE RIBOSOMAL SUBUNIT PROTEIN BL19M"/>
    <property type="match status" value="1"/>
</dbReference>
<dbReference type="PANTHER" id="PTHR15680">
    <property type="entry name" value="RIBOSOMAL PROTEIN L19"/>
    <property type="match status" value="1"/>
</dbReference>
<dbReference type="Pfam" id="PF01245">
    <property type="entry name" value="Ribosomal_L19"/>
    <property type="match status" value="1"/>
</dbReference>
<dbReference type="PIRSF" id="PIRSF002191">
    <property type="entry name" value="Ribosomal_L19"/>
    <property type="match status" value="1"/>
</dbReference>
<dbReference type="PRINTS" id="PR00061">
    <property type="entry name" value="RIBOSOMALL19"/>
</dbReference>
<dbReference type="SUPFAM" id="SSF50104">
    <property type="entry name" value="Translation proteins SH3-like domain"/>
    <property type="match status" value="1"/>
</dbReference>
<dbReference type="PROSITE" id="PS01015">
    <property type="entry name" value="RIBOSOMAL_L19"/>
    <property type="match status" value="1"/>
</dbReference>
<keyword id="KW-0687">Ribonucleoprotein</keyword>
<keyword id="KW-0689">Ribosomal protein</keyword>
<reference key="1">
    <citation type="journal article" date="2006" name="PLoS Biol.">
        <title>The genome of deep-sea vent chemolithoautotroph Thiomicrospira crunogena XCL-2.</title>
        <authorList>
            <person name="Scott K.M."/>
            <person name="Sievert S.M."/>
            <person name="Abril F.N."/>
            <person name="Ball L.A."/>
            <person name="Barrett C.J."/>
            <person name="Blake R.A."/>
            <person name="Boller A.J."/>
            <person name="Chain P.S.G."/>
            <person name="Clark J.A."/>
            <person name="Davis C.R."/>
            <person name="Detter C."/>
            <person name="Do K.F."/>
            <person name="Dobrinski K.P."/>
            <person name="Faza B.I."/>
            <person name="Fitzpatrick K.A."/>
            <person name="Freyermuth S.K."/>
            <person name="Harmer T.L."/>
            <person name="Hauser L.J."/>
            <person name="Huegler M."/>
            <person name="Kerfeld C.A."/>
            <person name="Klotz M.G."/>
            <person name="Kong W.W."/>
            <person name="Land M."/>
            <person name="Lapidus A."/>
            <person name="Larimer F.W."/>
            <person name="Longo D.L."/>
            <person name="Lucas S."/>
            <person name="Malfatti S.A."/>
            <person name="Massey S.E."/>
            <person name="Martin D.D."/>
            <person name="McCuddin Z."/>
            <person name="Meyer F."/>
            <person name="Moore J.L."/>
            <person name="Ocampo L.H. Jr."/>
            <person name="Paul J.H."/>
            <person name="Paulsen I.T."/>
            <person name="Reep D.K."/>
            <person name="Ren Q."/>
            <person name="Ross R.L."/>
            <person name="Sato P.Y."/>
            <person name="Thomas P."/>
            <person name="Tinkham L.E."/>
            <person name="Zeruth G.T."/>
        </authorList>
    </citation>
    <scope>NUCLEOTIDE SEQUENCE [LARGE SCALE GENOMIC DNA]</scope>
    <source>
        <strain>DSM 25203 / XCL-2</strain>
    </source>
</reference>
<gene>
    <name evidence="1" type="primary">rplS</name>
    <name type="ordered locus">Tcr_0650</name>
</gene>
<organism>
    <name type="scientific">Hydrogenovibrio crunogenus (strain DSM 25203 / XCL-2)</name>
    <name type="common">Thiomicrospira crunogena</name>
    <dbReference type="NCBI Taxonomy" id="317025"/>
    <lineage>
        <taxon>Bacteria</taxon>
        <taxon>Pseudomonadati</taxon>
        <taxon>Pseudomonadota</taxon>
        <taxon>Gammaproteobacteria</taxon>
        <taxon>Thiotrichales</taxon>
        <taxon>Piscirickettsiaceae</taxon>
        <taxon>Hydrogenovibrio</taxon>
    </lineage>
</organism>
<name>RL19_HYDCU</name>
<comment type="function">
    <text evidence="1">This protein is located at the 30S-50S ribosomal subunit interface and may play a role in the structure and function of the aminoacyl-tRNA binding site.</text>
</comment>
<comment type="similarity">
    <text evidence="1">Belongs to the bacterial ribosomal protein bL19 family.</text>
</comment>
<proteinExistence type="inferred from homology"/>
<feature type="chain" id="PRO_0000252558" description="Large ribosomal subunit protein bL19">
    <location>
        <begin position="1"/>
        <end position="115"/>
    </location>
</feature>